<organism>
    <name type="scientific">Aquifex aeolicus (strain VF5)</name>
    <dbReference type="NCBI Taxonomy" id="224324"/>
    <lineage>
        <taxon>Bacteria</taxon>
        <taxon>Pseudomonadati</taxon>
        <taxon>Aquificota</taxon>
        <taxon>Aquificia</taxon>
        <taxon>Aquificales</taxon>
        <taxon>Aquificaceae</taxon>
        <taxon>Aquifex</taxon>
    </lineage>
</organism>
<reference key="1">
    <citation type="journal article" date="1998" name="Nature">
        <title>The complete genome of the hyperthermophilic bacterium Aquifex aeolicus.</title>
        <authorList>
            <person name="Deckert G."/>
            <person name="Warren P.V."/>
            <person name="Gaasterland T."/>
            <person name="Young W.G."/>
            <person name="Lenox A.L."/>
            <person name="Graham D.E."/>
            <person name="Overbeek R."/>
            <person name="Snead M.A."/>
            <person name="Keller M."/>
            <person name="Aujay M."/>
            <person name="Huber R."/>
            <person name="Feldman R.A."/>
            <person name="Short J.M."/>
            <person name="Olsen G.J."/>
            <person name="Swanson R.V."/>
        </authorList>
    </citation>
    <scope>NUCLEOTIDE SEQUENCE [LARGE SCALE GENOMIC DNA]</scope>
    <source>
        <strain>VF5</strain>
    </source>
</reference>
<proteinExistence type="inferred from homology"/>
<sequence>MAKYIFITGGVLSSLGKGITSASIASILEEMGYRVTLQKLDPYLNVDAGTMSPYQHGEVYVTEDGAETDLDLGHYERFTNAVMTRDNNVTAGRIYYNVISKERKGDYLGATVQVIPHITEEIKESIKRVEKDNDIVIVEIGGTVGDIEGLPFLEAVRQLSLELGRKNSMFIHLTYVPYIKAAGELKTKPTQHSVKELRAIGIQPDMIICRADRELPKGIKSKIALFTNVKEEAVISAPDLEFSYEVPLKLKEQGIDRIITERLNLEHREVNLGKWKKIVNVLRNPEEEVNVALVGKYVELKDSYKSVIEALIHGGIANKVKVNVILKNSEQLDISELQEDIHGIMVPGGFGERGIRGKIEALNFGRENNIPTFGICLGMQLMAIEFARNVLGFSNANSTEFDPDTPFPVIDIMEEQKKVDKLGGTMRLGAYPCKVKENTLAHRIYQKDLIYERHRHRYEFNNRYRKDFESKGVVFSGTSPDDKLVEIMELKNHMWYLGCQFHPEFKSKPFAPHPLFRDFIRACLEYKRKFT</sequence>
<comment type="function">
    <text evidence="1">Catalyzes the ATP-dependent amination of UTP to CTP with either L-glutamine or ammonia as the source of nitrogen. Regulates intracellular CTP levels through interactions with the four ribonucleotide triphosphates.</text>
</comment>
<comment type="catalytic activity">
    <reaction evidence="1">
        <text>UTP + L-glutamine + ATP + H2O = CTP + L-glutamate + ADP + phosphate + 2 H(+)</text>
        <dbReference type="Rhea" id="RHEA:26426"/>
        <dbReference type="ChEBI" id="CHEBI:15377"/>
        <dbReference type="ChEBI" id="CHEBI:15378"/>
        <dbReference type="ChEBI" id="CHEBI:29985"/>
        <dbReference type="ChEBI" id="CHEBI:30616"/>
        <dbReference type="ChEBI" id="CHEBI:37563"/>
        <dbReference type="ChEBI" id="CHEBI:43474"/>
        <dbReference type="ChEBI" id="CHEBI:46398"/>
        <dbReference type="ChEBI" id="CHEBI:58359"/>
        <dbReference type="ChEBI" id="CHEBI:456216"/>
        <dbReference type="EC" id="6.3.4.2"/>
    </reaction>
</comment>
<comment type="catalytic activity">
    <reaction evidence="1">
        <text>L-glutamine + H2O = L-glutamate + NH4(+)</text>
        <dbReference type="Rhea" id="RHEA:15889"/>
        <dbReference type="ChEBI" id="CHEBI:15377"/>
        <dbReference type="ChEBI" id="CHEBI:28938"/>
        <dbReference type="ChEBI" id="CHEBI:29985"/>
        <dbReference type="ChEBI" id="CHEBI:58359"/>
    </reaction>
</comment>
<comment type="catalytic activity">
    <reaction evidence="1">
        <text>UTP + NH4(+) + ATP = CTP + ADP + phosphate + 2 H(+)</text>
        <dbReference type="Rhea" id="RHEA:16597"/>
        <dbReference type="ChEBI" id="CHEBI:15378"/>
        <dbReference type="ChEBI" id="CHEBI:28938"/>
        <dbReference type="ChEBI" id="CHEBI:30616"/>
        <dbReference type="ChEBI" id="CHEBI:37563"/>
        <dbReference type="ChEBI" id="CHEBI:43474"/>
        <dbReference type="ChEBI" id="CHEBI:46398"/>
        <dbReference type="ChEBI" id="CHEBI:456216"/>
    </reaction>
</comment>
<comment type="activity regulation">
    <text evidence="1">Allosterically activated by GTP, when glutamine is the substrate; GTP has no effect on the reaction when ammonia is the substrate. The allosteric effector GTP functions by stabilizing the protein conformation that binds the tetrahedral intermediate(s) formed during glutamine hydrolysis. Inhibited by the product CTP, via allosteric rather than competitive inhibition.</text>
</comment>
<comment type="pathway">
    <text evidence="1">Pyrimidine metabolism; CTP biosynthesis via de novo pathway; CTP from UDP: step 2/2.</text>
</comment>
<comment type="subunit">
    <text evidence="1">Homotetramer.</text>
</comment>
<comment type="miscellaneous">
    <text evidence="1">CTPSs have evolved a hybrid strategy for distinguishing between UTP and CTP. The overlapping regions of the product feedback inhibitory and substrate sites recognize a common feature in both compounds, the triphosphate moiety. To differentiate isosteric substrate and product pyrimidine rings, an additional pocket far from the expected kinase/ligase catalytic site, specifically recognizes the cytosine and ribose portions of the product inhibitor.</text>
</comment>
<comment type="similarity">
    <text evidence="1">Belongs to the CTP synthase family.</text>
</comment>
<feature type="chain" id="PRO_0000138160" description="CTP synthase">
    <location>
        <begin position="1"/>
        <end position="531"/>
    </location>
</feature>
<feature type="domain" description="Glutamine amidotransferase type-1" evidence="1">
    <location>
        <begin position="290"/>
        <end position="529"/>
    </location>
</feature>
<feature type="region of interest" description="Amidoligase domain" evidence="1">
    <location>
        <begin position="1"/>
        <end position="265"/>
    </location>
</feature>
<feature type="active site" description="Nucleophile; for glutamine hydrolysis" evidence="1">
    <location>
        <position position="376"/>
    </location>
</feature>
<feature type="active site" evidence="1">
    <location>
        <position position="502"/>
    </location>
</feature>
<feature type="active site" evidence="1">
    <location>
        <position position="504"/>
    </location>
</feature>
<feature type="binding site" evidence="1">
    <location>
        <position position="13"/>
    </location>
    <ligand>
        <name>CTP</name>
        <dbReference type="ChEBI" id="CHEBI:37563"/>
        <note>allosteric inhibitor</note>
    </ligand>
</feature>
<feature type="binding site" evidence="1">
    <location>
        <position position="13"/>
    </location>
    <ligand>
        <name>UTP</name>
        <dbReference type="ChEBI" id="CHEBI:46398"/>
    </ligand>
</feature>
<feature type="binding site" evidence="1">
    <location>
        <begin position="14"/>
        <end position="19"/>
    </location>
    <ligand>
        <name>ATP</name>
        <dbReference type="ChEBI" id="CHEBI:30616"/>
    </ligand>
</feature>
<feature type="binding site" evidence="1">
    <location>
        <position position="54"/>
    </location>
    <ligand>
        <name>L-glutamine</name>
        <dbReference type="ChEBI" id="CHEBI:58359"/>
    </ligand>
</feature>
<feature type="binding site" evidence="1">
    <location>
        <position position="71"/>
    </location>
    <ligand>
        <name>ATP</name>
        <dbReference type="ChEBI" id="CHEBI:30616"/>
    </ligand>
</feature>
<feature type="binding site" evidence="1">
    <location>
        <position position="71"/>
    </location>
    <ligand>
        <name>Mg(2+)</name>
        <dbReference type="ChEBI" id="CHEBI:18420"/>
    </ligand>
</feature>
<feature type="binding site" evidence="1">
    <location>
        <position position="139"/>
    </location>
    <ligand>
        <name>Mg(2+)</name>
        <dbReference type="ChEBI" id="CHEBI:18420"/>
    </ligand>
</feature>
<feature type="binding site" evidence="1">
    <location>
        <begin position="146"/>
        <end position="148"/>
    </location>
    <ligand>
        <name>CTP</name>
        <dbReference type="ChEBI" id="CHEBI:37563"/>
        <note>allosteric inhibitor</note>
    </ligand>
</feature>
<feature type="binding site" evidence="1">
    <location>
        <begin position="186"/>
        <end position="191"/>
    </location>
    <ligand>
        <name>CTP</name>
        <dbReference type="ChEBI" id="CHEBI:37563"/>
        <note>allosteric inhibitor</note>
    </ligand>
</feature>
<feature type="binding site" evidence="1">
    <location>
        <begin position="186"/>
        <end position="191"/>
    </location>
    <ligand>
        <name>UTP</name>
        <dbReference type="ChEBI" id="CHEBI:46398"/>
    </ligand>
</feature>
<feature type="binding site" evidence="1">
    <location>
        <position position="222"/>
    </location>
    <ligand>
        <name>CTP</name>
        <dbReference type="ChEBI" id="CHEBI:37563"/>
        <note>allosteric inhibitor</note>
    </ligand>
</feature>
<feature type="binding site" evidence="1">
    <location>
        <position position="222"/>
    </location>
    <ligand>
        <name>UTP</name>
        <dbReference type="ChEBI" id="CHEBI:46398"/>
    </ligand>
</feature>
<feature type="binding site" evidence="1">
    <location>
        <position position="349"/>
    </location>
    <ligand>
        <name>L-glutamine</name>
        <dbReference type="ChEBI" id="CHEBI:58359"/>
    </ligand>
</feature>
<feature type="binding site" evidence="1">
    <location>
        <begin position="377"/>
        <end position="380"/>
    </location>
    <ligand>
        <name>L-glutamine</name>
        <dbReference type="ChEBI" id="CHEBI:58359"/>
    </ligand>
</feature>
<feature type="binding site" evidence="1">
    <location>
        <position position="400"/>
    </location>
    <ligand>
        <name>L-glutamine</name>
        <dbReference type="ChEBI" id="CHEBI:58359"/>
    </ligand>
</feature>
<feature type="binding site" evidence="1">
    <location>
        <position position="457"/>
    </location>
    <ligand>
        <name>L-glutamine</name>
        <dbReference type="ChEBI" id="CHEBI:58359"/>
    </ligand>
</feature>
<evidence type="ECO:0000255" key="1">
    <source>
        <dbReference type="HAMAP-Rule" id="MF_01227"/>
    </source>
</evidence>
<gene>
    <name evidence="1" type="primary">pyrG</name>
    <name type="ordered locus">aq_1334</name>
</gene>
<protein>
    <recommendedName>
        <fullName evidence="1">CTP synthase</fullName>
        <ecNumber evidence="1">6.3.4.2</ecNumber>
    </recommendedName>
    <alternativeName>
        <fullName evidence="1">Cytidine 5'-triphosphate synthase</fullName>
    </alternativeName>
    <alternativeName>
        <fullName evidence="1">Cytidine triphosphate synthetase</fullName>
        <shortName evidence="1">CTP synthetase</shortName>
        <shortName evidence="1">CTPS</shortName>
    </alternativeName>
    <alternativeName>
        <fullName evidence="1">UTP--ammonia ligase</fullName>
    </alternativeName>
</protein>
<dbReference type="EC" id="6.3.4.2" evidence="1"/>
<dbReference type="EMBL" id="AE000657">
    <property type="protein sequence ID" value="AAC07314.1"/>
    <property type="molecule type" value="Genomic_DNA"/>
</dbReference>
<dbReference type="PIR" id="F70415">
    <property type="entry name" value="F70415"/>
</dbReference>
<dbReference type="RefSeq" id="NP_213917.1">
    <property type="nucleotide sequence ID" value="NC_000918.1"/>
</dbReference>
<dbReference type="RefSeq" id="WP_010880855.1">
    <property type="nucleotide sequence ID" value="NC_000918.1"/>
</dbReference>
<dbReference type="SMR" id="O67353"/>
<dbReference type="FunCoup" id="O67353">
    <property type="interactions" value="391"/>
</dbReference>
<dbReference type="STRING" id="224324.aq_1334"/>
<dbReference type="MEROPS" id="C26.964"/>
<dbReference type="EnsemblBacteria" id="AAC07314">
    <property type="protein sequence ID" value="AAC07314"/>
    <property type="gene ID" value="aq_1334"/>
</dbReference>
<dbReference type="KEGG" id="aae:aq_1334"/>
<dbReference type="PATRIC" id="fig|224324.8.peg.1042"/>
<dbReference type="eggNOG" id="COG0504">
    <property type="taxonomic scope" value="Bacteria"/>
</dbReference>
<dbReference type="HOGENOM" id="CLU_011675_5_0_0"/>
<dbReference type="InParanoid" id="O67353"/>
<dbReference type="OrthoDB" id="9801107at2"/>
<dbReference type="UniPathway" id="UPA00159">
    <property type="reaction ID" value="UER00277"/>
</dbReference>
<dbReference type="Proteomes" id="UP000000798">
    <property type="component" value="Chromosome"/>
</dbReference>
<dbReference type="GO" id="GO:0005829">
    <property type="term" value="C:cytosol"/>
    <property type="evidence" value="ECO:0000318"/>
    <property type="project" value="GO_Central"/>
</dbReference>
<dbReference type="GO" id="GO:0005524">
    <property type="term" value="F:ATP binding"/>
    <property type="evidence" value="ECO:0007669"/>
    <property type="project" value="UniProtKB-KW"/>
</dbReference>
<dbReference type="GO" id="GO:0003883">
    <property type="term" value="F:CTP synthase activity"/>
    <property type="evidence" value="ECO:0000318"/>
    <property type="project" value="GO_Central"/>
</dbReference>
<dbReference type="GO" id="GO:0004359">
    <property type="term" value="F:glutaminase activity"/>
    <property type="evidence" value="ECO:0007669"/>
    <property type="project" value="RHEA"/>
</dbReference>
<dbReference type="GO" id="GO:0042802">
    <property type="term" value="F:identical protein binding"/>
    <property type="evidence" value="ECO:0000318"/>
    <property type="project" value="GO_Central"/>
</dbReference>
<dbReference type="GO" id="GO:0046872">
    <property type="term" value="F:metal ion binding"/>
    <property type="evidence" value="ECO:0007669"/>
    <property type="project" value="UniProtKB-KW"/>
</dbReference>
<dbReference type="GO" id="GO:0044210">
    <property type="term" value="P:'de novo' CTP biosynthetic process"/>
    <property type="evidence" value="ECO:0007669"/>
    <property type="project" value="UniProtKB-UniRule"/>
</dbReference>
<dbReference type="GO" id="GO:0006241">
    <property type="term" value="P:CTP biosynthetic process"/>
    <property type="evidence" value="ECO:0000318"/>
    <property type="project" value="GO_Central"/>
</dbReference>
<dbReference type="GO" id="GO:0019856">
    <property type="term" value="P:pyrimidine nucleobase biosynthetic process"/>
    <property type="evidence" value="ECO:0000318"/>
    <property type="project" value="GO_Central"/>
</dbReference>
<dbReference type="CDD" id="cd03113">
    <property type="entry name" value="CTPS_N"/>
    <property type="match status" value="1"/>
</dbReference>
<dbReference type="CDD" id="cd01746">
    <property type="entry name" value="GATase1_CTP_Synthase"/>
    <property type="match status" value="1"/>
</dbReference>
<dbReference type="FunFam" id="3.40.50.300:FF:000009">
    <property type="entry name" value="CTP synthase"/>
    <property type="match status" value="1"/>
</dbReference>
<dbReference type="FunFam" id="3.40.50.880:FF:000002">
    <property type="entry name" value="CTP synthase"/>
    <property type="match status" value="1"/>
</dbReference>
<dbReference type="Gene3D" id="3.40.50.880">
    <property type="match status" value="1"/>
</dbReference>
<dbReference type="Gene3D" id="3.40.50.300">
    <property type="entry name" value="P-loop containing nucleotide triphosphate hydrolases"/>
    <property type="match status" value="1"/>
</dbReference>
<dbReference type="HAMAP" id="MF_01227">
    <property type="entry name" value="PyrG"/>
    <property type="match status" value="1"/>
</dbReference>
<dbReference type="InterPro" id="IPR029062">
    <property type="entry name" value="Class_I_gatase-like"/>
</dbReference>
<dbReference type="InterPro" id="IPR004468">
    <property type="entry name" value="CTP_synthase"/>
</dbReference>
<dbReference type="InterPro" id="IPR017456">
    <property type="entry name" value="CTP_synthase_N"/>
</dbReference>
<dbReference type="InterPro" id="IPR017926">
    <property type="entry name" value="GATASE"/>
</dbReference>
<dbReference type="InterPro" id="IPR033828">
    <property type="entry name" value="GATase1_CTP_Synthase"/>
</dbReference>
<dbReference type="InterPro" id="IPR027417">
    <property type="entry name" value="P-loop_NTPase"/>
</dbReference>
<dbReference type="NCBIfam" id="NF003792">
    <property type="entry name" value="PRK05380.1"/>
    <property type="match status" value="1"/>
</dbReference>
<dbReference type="NCBIfam" id="TIGR00337">
    <property type="entry name" value="PyrG"/>
    <property type="match status" value="1"/>
</dbReference>
<dbReference type="PANTHER" id="PTHR11550">
    <property type="entry name" value="CTP SYNTHASE"/>
    <property type="match status" value="1"/>
</dbReference>
<dbReference type="PANTHER" id="PTHR11550:SF0">
    <property type="entry name" value="CTP SYNTHASE-RELATED"/>
    <property type="match status" value="1"/>
</dbReference>
<dbReference type="Pfam" id="PF06418">
    <property type="entry name" value="CTP_synth_N"/>
    <property type="match status" value="1"/>
</dbReference>
<dbReference type="Pfam" id="PF00117">
    <property type="entry name" value="GATase"/>
    <property type="match status" value="1"/>
</dbReference>
<dbReference type="SUPFAM" id="SSF52317">
    <property type="entry name" value="Class I glutamine amidotransferase-like"/>
    <property type="match status" value="1"/>
</dbReference>
<dbReference type="SUPFAM" id="SSF52540">
    <property type="entry name" value="P-loop containing nucleoside triphosphate hydrolases"/>
    <property type="match status" value="1"/>
</dbReference>
<dbReference type="PROSITE" id="PS51273">
    <property type="entry name" value="GATASE_TYPE_1"/>
    <property type="match status" value="1"/>
</dbReference>
<accession>O67353</accession>
<name>PYRG_AQUAE</name>
<keyword id="KW-0067">ATP-binding</keyword>
<keyword id="KW-0315">Glutamine amidotransferase</keyword>
<keyword id="KW-0436">Ligase</keyword>
<keyword id="KW-0460">Magnesium</keyword>
<keyword id="KW-0479">Metal-binding</keyword>
<keyword id="KW-0547">Nucleotide-binding</keyword>
<keyword id="KW-0665">Pyrimidine biosynthesis</keyword>
<keyword id="KW-1185">Reference proteome</keyword>